<protein>
    <recommendedName>
        <fullName evidence="1">Fructose-1,6-bisphosphatase class 1</fullName>
        <shortName evidence="1">FBPase class 1</shortName>
        <ecNumber evidence="1">3.1.3.11</ecNumber>
    </recommendedName>
    <alternativeName>
        <fullName evidence="1">D-fructose-1,6-bisphosphate 1-phosphohydrolase class 1</fullName>
    </alternativeName>
</protein>
<proteinExistence type="inferred from homology"/>
<name>F16PA_ALIF1</name>
<comment type="catalytic activity">
    <reaction evidence="1">
        <text>beta-D-fructose 1,6-bisphosphate + H2O = beta-D-fructose 6-phosphate + phosphate</text>
        <dbReference type="Rhea" id="RHEA:11064"/>
        <dbReference type="ChEBI" id="CHEBI:15377"/>
        <dbReference type="ChEBI" id="CHEBI:32966"/>
        <dbReference type="ChEBI" id="CHEBI:43474"/>
        <dbReference type="ChEBI" id="CHEBI:57634"/>
        <dbReference type="EC" id="3.1.3.11"/>
    </reaction>
</comment>
<comment type="cofactor">
    <cofactor evidence="1">
        <name>Mg(2+)</name>
        <dbReference type="ChEBI" id="CHEBI:18420"/>
    </cofactor>
    <text evidence="1">Binds 2 magnesium ions per subunit.</text>
</comment>
<comment type="pathway">
    <text evidence="1">Carbohydrate biosynthesis; gluconeogenesis.</text>
</comment>
<comment type="subunit">
    <text evidence="1">Homotetramer.</text>
</comment>
<comment type="subcellular location">
    <subcellularLocation>
        <location evidence="1">Cytoplasm</location>
    </subcellularLocation>
</comment>
<comment type="similarity">
    <text evidence="1">Belongs to the FBPase class 1 family.</text>
</comment>
<gene>
    <name evidence="1" type="primary">fbp</name>
    <name type="ordered locus">VF_0264</name>
</gene>
<reference key="1">
    <citation type="journal article" date="2005" name="Proc. Natl. Acad. Sci. U.S.A.">
        <title>Complete genome sequence of Vibrio fischeri: a symbiotic bacterium with pathogenic congeners.</title>
        <authorList>
            <person name="Ruby E.G."/>
            <person name="Urbanowski M."/>
            <person name="Campbell J."/>
            <person name="Dunn A."/>
            <person name="Faini M."/>
            <person name="Gunsalus R."/>
            <person name="Lostroh P."/>
            <person name="Lupp C."/>
            <person name="McCann J."/>
            <person name="Millikan D."/>
            <person name="Schaefer A."/>
            <person name="Stabb E."/>
            <person name="Stevens A."/>
            <person name="Visick K."/>
            <person name="Whistler C."/>
            <person name="Greenberg E.P."/>
        </authorList>
    </citation>
    <scope>NUCLEOTIDE SEQUENCE [LARGE SCALE GENOMIC DNA]</scope>
    <source>
        <strain>ATCC 700601 / ES114</strain>
    </source>
</reference>
<organism>
    <name type="scientific">Aliivibrio fischeri (strain ATCC 700601 / ES114)</name>
    <name type="common">Vibrio fischeri</name>
    <dbReference type="NCBI Taxonomy" id="312309"/>
    <lineage>
        <taxon>Bacteria</taxon>
        <taxon>Pseudomonadati</taxon>
        <taxon>Pseudomonadota</taxon>
        <taxon>Gammaproteobacteria</taxon>
        <taxon>Vibrionales</taxon>
        <taxon>Vibrionaceae</taxon>
        <taxon>Aliivibrio</taxon>
    </lineage>
</organism>
<evidence type="ECO:0000255" key="1">
    <source>
        <dbReference type="HAMAP-Rule" id="MF_01855"/>
    </source>
</evidence>
<feature type="chain" id="PRO_0000364740" description="Fructose-1,6-bisphosphatase class 1">
    <location>
        <begin position="1"/>
        <end position="336"/>
    </location>
</feature>
<feature type="binding site" evidence="1">
    <location>
        <position position="92"/>
    </location>
    <ligand>
        <name>Mg(2+)</name>
        <dbReference type="ChEBI" id="CHEBI:18420"/>
        <label>1</label>
    </ligand>
</feature>
<feature type="binding site" evidence="1">
    <location>
        <position position="115"/>
    </location>
    <ligand>
        <name>Mg(2+)</name>
        <dbReference type="ChEBI" id="CHEBI:18420"/>
        <label>1</label>
    </ligand>
</feature>
<feature type="binding site" evidence="1">
    <location>
        <position position="115"/>
    </location>
    <ligand>
        <name>Mg(2+)</name>
        <dbReference type="ChEBI" id="CHEBI:18420"/>
        <label>2</label>
    </ligand>
</feature>
<feature type="binding site" evidence="1">
    <location>
        <position position="117"/>
    </location>
    <ligand>
        <name>Mg(2+)</name>
        <dbReference type="ChEBI" id="CHEBI:18420"/>
        <label>1</label>
    </ligand>
</feature>
<feature type="binding site" evidence="1">
    <location>
        <begin position="118"/>
        <end position="121"/>
    </location>
    <ligand>
        <name>substrate</name>
    </ligand>
</feature>
<feature type="binding site" evidence="1">
    <location>
        <position position="118"/>
    </location>
    <ligand>
        <name>Mg(2+)</name>
        <dbReference type="ChEBI" id="CHEBI:18420"/>
        <label>2</label>
    </ligand>
</feature>
<feature type="binding site" evidence="1">
    <location>
        <position position="211"/>
    </location>
    <ligand>
        <name>substrate</name>
    </ligand>
</feature>
<feature type="binding site" evidence="1">
    <location>
        <position position="244"/>
    </location>
    <ligand>
        <name>substrate</name>
    </ligand>
</feature>
<feature type="binding site" evidence="1">
    <location>
        <begin position="262"/>
        <end position="264"/>
    </location>
    <ligand>
        <name>substrate</name>
    </ligand>
</feature>
<feature type="binding site" evidence="1">
    <location>
        <position position="274"/>
    </location>
    <ligand>
        <name>substrate</name>
    </ligand>
</feature>
<feature type="binding site" evidence="1">
    <location>
        <position position="280"/>
    </location>
    <ligand>
        <name>Mg(2+)</name>
        <dbReference type="ChEBI" id="CHEBI:18420"/>
        <label>2</label>
    </ligand>
</feature>
<accession>Q5E887</accession>
<keyword id="KW-0119">Carbohydrate metabolism</keyword>
<keyword id="KW-0963">Cytoplasm</keyword>
<keyword id="KW-0378">Hydrolase</keyword>
<keyword id="KW-0460">Magnesium</keyword>
<keyword id="KW-0479">Metal-binding</keyword>
<keyword id="KW-1185">Reference proteome</keyword>
<sequence length="336" mass="37334">MSEIRTLGEFIVAKQHDFPHASGELSSLIGSIKLAAKIVNREINKAGLVDITGASGEENIQGEQQQKLDVYANDKFKSALEARDQVCGVASEEEDEAVAFNKELNKNAKYVVLMDPLDGSSNIDVNVSVGTIFSIYRRISPIGTPATEEDFLQPGHKQVAAGYIIYGSSTMLVYTTGNGVHGFTYDPSLGVFCLSHENMQIPKDGNIYSINEGNYIRFPEGIKQYLKFCQESKPEDNRPYTSRYIGSLVADFHRNLLKGGIYLYPSTQAYPNGKLRLLYECNPMAMLIEEAGGKATDGEQRILDIKPSELHQRVPFFVGSTNMVNKVHAFLDEWRD</sequence>
<dbReference type="EC" id="3.1.3.11" evidence="1"/>
<dbReference type="EMBL" id="CP000020">
    <property type="protein sequence ID" value="AAW84759.1"/>
    <property type="molecule type" value="Genomic_DNA"/>
</dbReference>
<dbReference type="RefSeq" id="WP_011261083.1">
    <property type="nucleotide sequence ID" value="NC_006840.2"/>
</dbReference>
<dbReference type="RefSeq" id="YP_203647.1">
    <property type="nucleotide sequence ID" value="NC_006840.2"/>
</dbReference>
<dbReference type="SMR" id="Q5E887"/>
<dbReference type="STRING" id="312309.VF_0264"/>
<dbReference type="EnsemblBacteria" id="AAW84759">
    <property type="protein sequence ID" value="AAW84759"/>
    <property type="gene ID" value="VF_0264"/>
</dbReference>
<dbReference type="GeneID" id="54162885"/>
<dbReference type="KEGG" id="vfi:VF_0264"/>
<dbReference type="PATRIC" id="fig|312309.11.peg.259"/>
<dbReference type="eggNOG" id="COG0158">
    <property type="taxonomic scope" value="Bacteria"/>
</dbReference>
<dbReference type="HOGENOM" id="CLU_039977_2_2_6"/>
<dbReference type="OrthoDB" id="9806756at2"/>
<dbReference type="UniPathway" id="UPA00138"/>
<dbReference type="Proteomes" id="UP000000537">
    <property type="component" value="Chromosome I"/>
</dbReference>
<dbReference type="GO" id="GO:0005829">
    <property type="term" value="C:cytosol"/>
    <property type="evidence" value="ECO:0007669"/>
    <property type="project" value="TreeGrafter"/>
</dbReference>
<dbReference type="GO" id="GO:0042132">
    <property type="term" value="F:fructose 1,6-bisphosphate 1-phosphatase activity"/>
    <property type="evidence" value="ECO:0007669"/>
    <property type="project" value="UniProtKB-UniRule"/>
</dbReference>
<dbReference type="GO" id="GO:0000287">
    <property type="term" value="F:magnesium ion binding"/>
    <property type="evidence" value="ECO:0007669"/>
    <property type="project" value="UniProtKB-UniRule"/>
</dbReference>
<dbReference type="GO" id="GO:0030388">
    <property type="term" value="P:fructose 1,6-bisphosphate metabolic process"/>
    <property type="evidence" value="ECO:0007669"/>
    <property type="project" value="TreeGrafter"/>
</dbReference>
<dbReference type="GO" id="GO:0006002">
    <property type="term" value="P:fructose 6-phosphate metabolic process"/>
    <property type="evidence" value="ECO:0007669"/>
    <property type="project" value="TreeGrafter"/>
</dbReference>
<dbReference type="GO" id="GO:0006000">
    <property type="term" value="P:fructose metabolic process"/>
    <property type="evidence" value="ECO:0007669"/>
    <property type="project" value="TreeGrafter"/>
</dbReference>
<dbReference type="GO" id="GO:0006094">
    <property type="term" value="P:gluconeogenesis"/>
    <property type="evidence" value="ECO:0007669"/>
    <property type="project" value="UniProtKB-UniRule"/>
</dbReference>
<dbReference type="GO" id="GO:0005986">
    <property type="term" value="P:sucrose biosynthetic process"/>
    <property type="evidence" value="ECO:0007669"/>
    <property type="project" value="TreeGrafter"/>
</dbReference>
<dbReference type="CDD" id="cd00354">
    <property type="entry name" value="FBPase"/>
    <property type="match status" value="1"/>
</dbReference>
<dbReference type="FunFam" id="3.30.540.10:FF:000002">
    <property type="entry name" value="Fructose-1,6-bisphosphatase class 1"/>
    <property type="match status" value="1"/>
</dbReference>
<dbReference type="FunFam" id="3.40.190.80:FF:000001">
    <property type="entry name" value="Fructose-1,6-bisphosphatase class 1"/>
    <property type="match status" value="1"/>
</dbReference>
<dbReference type="Gene3D" id="3.40.190.80">
    <property type="match status" value="1"/>
</dbReference>
<dbReference type="Gene3D" id="3.30.540.10">
    <property type="entry name" value="Fructose-1,6-Bisphosphatase, subunit A, domain 1"/>
    <property type="match status" value="1"/>
</dbReference>
<dbReference type="HAMAP" id="MF_01855">
    <property type="entry name" value="FBPase_class1"/>
    <property type="match status" value="1"/>
</dbReference>
<dbReference type="InterPro" id="IPR044015">
    <property type="entry name" value="FBPase_C_dom"/>
</dbReference>
<dbReference type="InterPro" id="IPR000146">
    <property type="entry name" value="FBPase_class-1"/>
</dbReference>
<dbReference type="InterPro" id="IPR033391">
    <property type="entry name" value="FBPase_N"/>
</dbReference>
<dbReference type="InterPro" id="IPR028343">
    <property type="entry name" value="FBPtase"/>
</dbReference>
<dbReference type="InterPro" id="IPR020548">
    <property type="entry name" value="Fructose_bisphosphatase_AS"/>
</dbReference>
<dbReference type="NCBIfam" id="NF006778">
    <property type="entry name" value="PRK09293.1-1"/>
    <property type="match status" value="1"/>
</dbReference>
<dbReference type="NCBIfam" id="NF006779">
    <property type="entry name" value="PRK09293.1-3"/>
    <property type="match status" value="1"/>
</dbReference>
<dbReference type="PANTHER" id="PTHR11556">
    <property type="entry name" value="FRUCTOSE-1,6-BISPHOSPHATASE-RELATED"/>
    <property type="match status" value="1"/>
</dbReference>
<dbReference type="PANTHER" id="PTHR11556:SF35">
    <property type="entry name" value="SEDOHEPTULOSE-1,7-BISPHOSPHATASE, CHLOROPLASTIC"/>
    <property type="match status" value="1"/>
</dbReference>
<dbReference type="Pfam" id="PF00316">
    <property type="entry name" value="FBPase"/>
    <property type="match status" value="1"/>
</dbReference>
<dbReference type="Pfam" id="PF18913">
    <property type="entry name" value="FBPase_C"/>
    <property type="match status" value="1"/>
</dbReference>
<dbReference type="PIRSF" id="PIRSF500210">
    <property type="entry name" value="FBPtase"/>
    <property type="match status" value="1"/>
</dbReference>
<dbReference type="PIRSF" id="PIRSF000904">
    <property type="entry name" value="FBPtase_SBPase"/>
    <property type="match status" value="1"/>
</dbReference>
<dbReference type="PRINTS" id="PR00115">
    <property type="entry name" value="F16BPHPHTASE"/>
</dbReference>
<dbReference type="SUPFAM" id="SSF56655">
    <property type="entry name" value="Carbohydrate phosphatase"/>
    <property type="match status" value="1"/>
</dbReference>
<dbReference type="PROSITE" id="PS00124">
    <property type="entry name" value="FBPASE"/>
    <property type="match status" value="1"/>
</dbReference>